<feature type="chain" id="PRO_0000099800" description="Light-harvesting protein B-800-850 alpha chain E">
    <location>
        <begin position="1"/>
        <end position="59"/>
    </location>
</feature>
<feature type="topological domain" description="Cytoplasmic" evidence="1">
    <location>
        <begin position="1"/>
        <end position="11"/>
    </location>
</feature>
<feature type="transmembrane region" description="Helical" evidence="1">
    <location>
        <begin position="12"/>
        <end position="35"/>
    </location>
</feature>
<feature type="topological domain" description="Periplasmic" evidence="1">
    <location>
        <begin position="36"/>
        <end position="59"/>
    </location>
</feature>
<feature type="binding site" description="axial binding residue" evidence="1">
    <location>
        <position position="31"/>
    </location>
    <ligand>
        <name>a bacteriochlorophyll</name>
        <dbReference type="ChEBI" id="CHEBI:38201"/>
    </ligand>
    <ligandPart>
        <name>Mg</name>
        <dbReference type="ChEBI" id="CHEBI:25107"/>
    </ligandPart>
</feature>
<feature type="sequence variant" description="In strain: 2.6.1 / French.">
    <original>S</original>
    <variation>P</variation>
    <location>
        <position position="42"/>
    </location>
</feature>
<feature type="sequence conflict" description="In Ref. 1; CAA44949." evidence="2" ref="1">
    <original>ESSVSIG</original>
    <variation>R</variation>
    <location>
        <begin position="53"/>
        <end position="59"/>
    </location>
</feature>
<comment type="function">
    <text>Antenna complexes are light-harvesting systems, which transfer the excitation energy to the reaction centers.</text>
</comment>
<comment type="subunit">
    <text>The core complex is formed by different alpha and beta chains, binding bacteriochlorophyll molecules, and arranged most probably in tetrameric structures disposed around the reaction center. The non-pigmented gamma chains may constitute additional components.</text>
</comment>
<comment type="subcellular location">
    <subcellularLocation>
        <location>Cell inner membrane</location>
        <topology>Single-pass type II membrane protein</topology>
    </subcellularLocation>
</comment>
<comment type="similarity">
    <text evidence="2">Belongs to the antenna complex alpha subunit family.</text>
</comment>
<name>LHA5_RHOPA</name>
<gene>
    <name type="primary">pucAE</name>
    <name type="ordered locus">RPA1492</name>
</gene>
<reference key="1">
    <citation type="journal article" date="1993" name="Eur. J. Biochem.">
        <title>Cloning of a new antenna gene cluster and expression analysis of the antenna gene family of Rhodopseudomonas palustris.</title>
        <authorList>
            <person name="Tadros M.H."/>
            <person name="Katsiou E."/>
            <person name="Hoon M.A."/>
            <person name="Yurkova N."/>
            <person name="Ramji D.P."/>
        </authorList>
    </citation>
    <scope>NUCLEOTIDE SEQUENCE [GENOMIC DNA]</scope>
</reference>
<reference key="2">
    <citation type="journal article" date="2004" name="Nat. Biotechnol.">
        <title>Complete genome sequence of the metabolically versatile photosynthetic bacterium Rhodopseudomonas palustris.</title>
        <authorList>
            <person name="Larimer F.W."/>
            <person name="Chain P."/>
            <person name="Hauser L."/>
            <person name="Lamerdin J.E."/>
            <person name="Malfatti S."/>
            <person name="Do L."/>
            <person name="Land M.L."/>
            <person name="Pelletier D.A."/>
            <person name="Beatty J.T."/>
            <person name="Lang A.S."/>
            <person name="Tabita F.R."/>
            <person name="Gibson J.L."/>
            <person name="Hanson T.E."/>
            <person name="Bobst C."/>
            <person name="Torres y Torres J.L."/>
            <person name="Peres C."/>
            <person name="Harrison F.H."/>
            <person name="Gibson J."/>
            <person name="Harwood C.S."/>
        </authorList>
    </citation>
    <scope>NUCLEOTIDE SEQUENCE [LARGE SCALE GENOMIC DNA]</scope>
    <source>
        <strain>ATCC BAA-98 / CGA009</strain>
    </source>
</reference>
<reference key="3">
    <citation type="book" date="1990" name="Current research in photosynthesis">
        <editorList>
            <person name="Baltscheffsky M."/>
        </editorList>
        <authorList>
            <person name="Brunisholz R.A."/>
            <person name="Evans M.B."/>
            <person name="Cogdell R.J."/>
            <person name="Frank G."/>
            <person name="Zuber H."/>
        </authorList>
    </citation>
    <scope>PROTEIN SEQUENCE OF 1-49</scope>
    <source>
        <strain>2.6.1 / French</strain>
    </source>
</reference>
<proteinExistence type="evidence at protein level"/>
<organism>
    <name type="scientific">Rhodopseudomonas palustris (strain ATCC BAA-98 / CGA009)</name>
    <dbReference type="NCBI Taxonomy" id="258594"/>
    <lineage>
        <taxon>Bacteria</taxon>
        <taxon>Pseudomonadati</taxon>
        <taxon>Pseudomonadota</taxon>
        <taxon>Alphaproteobacteria</taxon>
        <taxon>Hyphomicrobiales</taxon>
        <taxon>Nitrobacteraceae</taxon>
        <taxon>Rhodopseudomonas</taxon>
    </lineage>
</organism>
<dbReference type="EMBL" id="X63347">
    <property type="protein sequence ID" value="CAA44949.1"/>
    <property type="molecule type" value="Genomic_DNA"/>
</dbReference>
<dbReference type="EMBL" id="BX572597">
    <property type="protein sequence ID" value="CAE26934.1"/>
    <property type="molecule type" value="Genomic_DNA"/>
</dbReference>
<dbReference type="PIR" id="S39074">
    <property type="entry name" value="S39074"/>
</dbReference>
<dbReference type="RefSeq" id="WP_011157053.1">
    <property type="nucleotide sequence ID" value="NZ_CP116810.1"/>
</dbReference>
<dbReference type="PDB" id="7ZE8">
    <property type="method" value="EM"/>
    <property type="resolution" value="3.60 A"/>
    <property type="chains" value="A/C/E/G/I/K/M/O/Q=1-59"/>
</dbReference>
<dbReference type="PDBsum" id="7ZE8"/>
<dbReference type="SMR" id="P35105"/>
<dbReference type="STRING" id="258594.RPA1492"/>
<dbReference type="eggNOG" id="ENOG5033EHH">
    <property type="taxonomic scope" value="Bacteria"/>
</dbReference>
<dbReference type="HOGENOM" id="CLU_202473_0_0_5"/>
<dbReference type="PhylomeDB" id="P35105"/>
<dbReference type="GO" id="GO:0019866">
    <property type="term" value="C:organelle inner membrane"/>
    <property type="evidence" value="ECO:0007669"/>
    <property type="project" value="InterPro"/>
</dbReference>
<dbReference type="GO" id="GO:0005886">
    <property type="term" value="C:plasma membrane"/>
    <property type="evidence" value="ECO:0007669"/>
    <property type="project" value="UniProtKB-SubCell"/>
</dbReference>
<dbReference type="GO" id="GO:0030077">
    <property type="term" value="C:plasma membrane light-harvesting complex"/>
    <property type="evidence" value="ECO:0007669"/>
    <property type="project" value="InterPro"/>
</dbReference>
<dbReference type="GO" id="GO:0042314">
    <property type="term" value="F:bacteriochlorophyll binding"/>
    <property type="evidence" value="ECO:0007669"/>
    <property type="project" value="UniProtKB-KW"/>
</dbReference>
<dbReference type="GO" id="GO:0045156">
    <property type="term" value="F:electron transporter, transferring electrons within the cyclic electron transport pathway of photosynthesis activity"/>
    <property type="evidence" value="ECO:0007669"/>
    <property type="project" value="InterPro"/>
</dbReference>
<dbReference type="GO" id="GO:0046872">
    <property type="term" value="F:metal ion binding"/>
    <property type="evidence" value="ECO:0007669"/>
    <property type="project" value="UniProtKB-KW"/>
</dbReference>
<dbReference type="GO" id="GO:0019684">
    <property type="term" value="P:photosynthesis, light reaction"/>
    <property type="evidence" value="ECO:0007669"/>
    <property type="project" value="InterPro"/>
</dbReference>
<dbReference type="Gene3D" id="4.10.220.20">
    <property type="entry name" value="Light-harvesting complex"/>
    <property type="match status" value="1"/>
</dbReference>
<dbReference type="InterPro" id="IPR000066">
    <property type="entry name" value="Antenna_a/b"/>
</dbReference>
<dbReference type="InterPro" id="IPR018332">
    <property type="entry name" value="Antenna_alpha"/>
</dbReference>
<dbReference type="InterPro" id="IPR002361">
    <property type="entry name" value="Antenna_alpha_CS"/>
</dbReference>
<dbReference type="InterPro" id="IPR035889">
    <property type="entry name" value="Light-harvesting_complex"/>
</dbReference>
<dbReference type="Pfam" id="PF00556">
    <property type="entry name" value="LHC"/>
    <property type="match status" value="1"/>
</dbReference>
<dbReference type="PRINTS" id="PR00673">
    <property type="entry name" value="LIGHTHARVSTA"/>
</dbReference>
<dbReference type="SUPFAM" id="SSF56918">
    <property type="entry name" value="Light-harvesting complex subunits"/>
    <property type="match status" value="1"/>
</dbReference>
<dbReference type="PROSITE" id="PS00968">
    <property type="entry name" value="ANTENNA_COMP_ALPHA"/>
    <property type="match status" value="1"/>
</dbReference>
<protein>
    <recommendedName>
        <fullName>Light-harvesting protein B-800-850 alpha chain E</fullName>
    </recommendedName>
    <alternativeName>
        <fullName>Antenna pigment protein alpha chain E</fullName>
    </alternativeName>
    <alternativeName>
        <fullName>LH II-E alpha</fullName>
    </alternativeName>
</protein>
<sequence>MNQGRIWTVVKPTVGLPLLLGSVTVIAILVHFAVLSNTTWFSKYWNGKAAAIESSVSIG</sequence>
<keyword id="KW-0002">3D-structure</keyword>
<keyword id="KW-0042">Antenna complex</keyword>
<keyword id="KW-0076">Bacteriochlorophyll</keyword>
<keyword id="KW-0997">Cell inner membrane</keyword>
<keyword id="KW-1003">Cell membrane</keyword>
<keyword id="KW-0148">Chlorophyll</keyword>
<keyword id="KW-0157">Chromophore</keyword>
<keyword id="KW-0903">Direct protein sequencing</keyword>
<keyword id="KW-0437">Light-harvesting polypeptide</keyword>
<keyword id="KW-0460">Magnesium</keyword>
<keyword id="KW-0472">Membrane</keyword>
<keyword id="KW-0479">Metal-binding</keyword>
<keyword id="KW-0812">Transmembrane</keyword>
<keyword id="KW-1133">Transmembrane helix</keyword>
<accession>P35105</accession>
<evidence type="ECO:0000255" key="1"/>
<evidence type="ECO:0000305" key="2"/>